<proteinExistence type="inferred from homology"/>
<reference key="1">
    <citation type="journal article" date="2003" name="Proc. Natl. Acad. Sci. U.S.A.">
        <title>The complete genome sequence of Mycobacterium bovis.</title>
        <authorList>
            <person name="Garnier T."/>
            <person name="Eiglmeier K."/>
            <person name="Camus J.-C."/>
            <person name="Medina N."/>
            <person name="Mansoor H."/>
            <person name="Pryor M."/>
            <person name="Duthoy S."/>
            <person name="Grondin S."/>
            <person name="Lacroix C."/>
            <person name="Monsempe C."/>
            <person name="Simon S."/>
            <person name="Harris B."/>
            <person name="Atkin R."/>
            <person name="Doggett J."/>
            <person name="Mayes R."/>
            <person name="Keating L."/>
            <person name="Wheeler P.R."/>
            <person name="Parkhill J."/>
            <person name="Barrell B.G."/>
            <person name="Cole S.T."/>
            <person name="Gordon S.V."/>
            <person name="Hewinson R.G."/>
        </authorList>
    </citation>
    <scope>NUCLEOTIDE SEQUENCE [LARGE SCALE GENOMIC DNA]</scope>
    <source>
        <strain>ATCC BAA-935 / AF2122/97</strain>
    </source>
</reference>
<reference key="2">
    <citation type="journal article" date="2017" name="Genome Announc.">
        <title>Updated reference genome sequence and annotation of Mycobacterium bovis AF2122/97.</title>
        <authorList>
            <person name="Malone K.M."/>
            <person name="Farrell D."/>
            <person name="Stuber T.P."/>
            <person name="Schubert O.T."/>
            <person name="Aebersold R."/>
            <person name="Robbe-Austerman S."/>
            <person name="Gordon S.V."/>
        </authorList>
    </citation>
    <scope>NUCLEOTIDE SEQUENCE [LARGE SCALE GENOMIC DNA]</scope>
    <scope>GENOME REANNOTATION</scope>
    <source>
        <strain>ATCC BAA-935 / AF2122/97</strain>
    </source>
</reference>
<name>PSD_MYCBO</name>
<gene>
    <name evidence="1" type="primary">psd</name>
    <name type="ordered locus">BQ2027_MB0445C</name>
</gene>
<evidence type="ECO:0000255" key="1">
    <source>
        <dbReference type="HAMAP-Rule" id="MF_00664"/>
    </source>
</evidence>
<protein>
    <recommendedName>
        <fullName evidence="1">Phosphatidylserine decarboxylase proenzyme</fullName>
        <ecNumber evidence="1">4.1.1.65</ecNumber>
    </recommendedName>
    <component>
        <recommendedName>
            <fullName evidence="1">Phosphatidylserine decarboxylase alpha chain</fullName>
        </recommendedName>
    </component>
    <component>
        <recommendedName>
            <fullName evidence="1">Phosphatidylserine decarboxylase beta chain</fullName>
        </recommendedName>
    </component>
</protein>
<sequence length="231" mass="24260">MARRPRPDGPQHLLALVRSAVPPVHPAGRPFIAAGLAIAAVGHRYRWLRGTGLLAAAACAGFFRHPQRVPPTRPAAIVAPADGVICAIDSAAPPAELSMGDTPLPRVSIFLSILDAHVQRAPVSGEVIAVQHRPGRFGSADLPEASDDNERTSVRIRMPNGAEVVAVQIAGLVARRIVCDAHVGDKLAIGDTYGLIRFGSRLDTYLPAGAEPIVNVGQRAVAGETVLAECR</sequence>
<accession>P67548</accession>
<accession>A0A1R3XVB5</accession>
<accession>O86324</accession>
<accession>X2BF21</accession>
<comment type="function">
    <text evidence="1">Catalyzes the formation of phosphatidylethanolamine (PtdEtn) from phosphatidylserine (PtdSer).</text>
</comment>
<comment type="catalytic activity">
    <reaction evidence="1">
        <text>a 1,2-diacyl-sn-glycero-3-phospho-L-serine + H(+) = a 1,2-diacyl-sn-glycero-3-phosphoethanolamine + CO2</text>
        <dbReference type="Rhea" id="RHEA:20828"/>
        <dbReference type="ChEBI" id="CHEBI:15378"/>
        <dbReference type="ChEBI" id="CHEBI:16526"/>
        <dbReference type="ChEBI" id="CHEBI:57262"/>
        <dbReference type="ChEBI" id="CHEBI:64612"/>
        <dbReference type="EC" id="4.1.1.65"/>
    </reaction>
</comment>
<comment type="cofactor">
    <cofactor evidence="1">
        <name>pyruvate</name>
        <dbReference type="ChEBI" id="CHEBI:15361"/>
    </cofactor>
    <text evidence="1">Binds 1 pyruvoyl group covalently per subunit.</text>
</comment>
<comment type="pathway">
    <text evidence="1">Phospholipid metabolism; phosphatidylethanolamine biosynthesis; phosphatidylethanolamine from CDP-diacylglycerol: step 2/2.</text>
</comment>
<comment type="subunit">
    <text evidence="1">Heterodimer of a large membrane-associated beta subunit and a small pyruvoyl-containing alpha subunit.</text>
</comment>
<comment type="subcellular location">
    <subcellularLocation>
        <location evidence="1">Cell membrane</location>
        <topology evidence="1">Peripheral membrane protein</topology>
    </subcellularLocation>
</comment>
<comment type="PTM">
    <text evidence="1">Is synthesized initially as an inactive proenzyme. Formation of the active enzyme involves a self-maturation process in which the active site pyruvoyl group is generated from an internal serine residue via an autocatalytic post-translational modification. Two non-identical subunits are generated from the proenzyme in this reaction, and the pyruvate is formed at the N-terminus of the alpha chain, which is derived from the carboxyl end of the proenzyme. The post-translation cleavage follows an unusual pathway, termed non-hydrolytic serinolysis, in which the side chain hydroxyl group of the serine supplies its oxygen atom to form the C-terminus of the beta chain, while the remainder of the serine residue undergoes an oxidative deamination to produce ammonia and the pyruvoyl prosthetic group on the alpha chain.</text>
</comment>
<comment type="similarity">
    <text evidence="1">Belongs to the phosphatidylserine decarboxylase family. PSD-A subfamily.</text>
</comment>
<dbReference type="EC" id="4.1.1.65" evidence="1"/>
<dbReference type="EMBL" id="LT708304">
    <property type="protein sequence ID" value="SIT99031.1"/>
    <property type="molecule type" value="Genomic_DNA"/>
</dbReference>
<dbReference type="RefSeq" id="NP_854108.1">
    <property type="nucleotide sequence ID" value="NC_002945.3"/>
</dbReference>
<dbReference type="RefSeq" id="WP_003402216.1">
    <property type="nucleotide sequence ID" value="NC_002945.4"/>
</dbReference>
<dbReference type="SMR" id="P67548"/>
<dbReference type="PATRIC" id="fig|233413.5.peg.485"/>
<dbReference type="UniPathway" id="UPA00558">
    <property type="reaction ID" value="UER00616"/>
</dbReference>
<dbReference type="Proteomes" id="UP000001419">
    <property type="component" value="Chromosome"/>
</dbReference>
<dbReference type="GO" id="GO:0005886">
    <property type="term" value="C:plasma membrane"/>
    <property type="evidence" value="ECO:0007669"/>
    <property type="project" value="UniProtKB-SubCell"/>
</dbReference>
<dbReference type="GO" id="GO:0004609">
    <property type="term" value="F:phosphatidylserine decarboxylase activity"/>
    <property type="evidence" value="ECO:0007669"/>
    <property type="project" value="UniProtKB-UniRule"/>
</dbReference>
<dbReference type="GO" id="GO:0006646">
    <property type="term" value="P:phosphatidylethanolamine biosynthetic process"/>
    <property type="evidence" value="ECO:0007669"/>
    <property type="project" value="UniProtKB-UniRule"/>
</dbReference>
<dbReference type="HAMAP" id="MF_00664">
    <property type="entry name" value="PS_decarb_PSD_A"/>
    <property type="match status" value="1"/>
</dbReference>
<dbReference type="InterPro" id="IPR003817">
    <property type="entry name" value="PS_Dcarbxylase"/>
</dbReference>
<dbReference type="InterPro" id="IPR033175">
    <property type="entry name" value="PSD-A"/>
</dbReference>
<dbReference type="NCBIfam" id="NF003679">
    <property type="entry name" value="PRK05305.1-3"/>
    <property type="match status" value="1"/>
</dbReference>
<dbReference type="PANTHER" id="PTHR35809">
    <property type="entry name" value="ARCHAETIDYLSERINE DECARBOXYLASE PROENZYME-RELATED"/>
    <property type="match status" value="1"/>
</dbReference>
<dbReference type="PANTHER" id="PTHR35809:SF1">
    <property type="entry name" value="ARCHAETIDYLSERINE DECARBOXYLASE PROENZYME-RELATED"/>
    <property type="match status" value="1"/>
</dbReference>
<dbReference type="Pfam" id="PF02666">
    <property type="entry name" value="PS_Dcarbxylase"/>
    <property type="match status" value="1"/>
</dbReference>
<organism>
    <name type="scientific">Mycobacterium bovis (strain ATCC BAA-935 / AF2122/97)</name>
    <dbReference type="NCBI Taxonomy" id="233413"/>
    <lineage>
        <taxon>Bacteria</taxon>
        <taxon>Bacillati</taxon>
        <taxon>Actinomycetota</taxon>
        <taxon>Actinomycetes</taxon>
        <taxon>Mycobacteriales</taxon>
        <taxon>Mycobacteriaceae</taxon>
        <taxon>Mycobacterium</taxon>
        <taxon>Mycobacterium tuberculosis complex</taxon>
    </lineage>
</organism>
<keyword id="KW-1003">Cell membrane</keyword>
<keyword id="KW-0210">Decarboxylase</keyword>
<keyword id="KW-0444">Lipid biosynthesis</keyword>
<keyword id="KW-0443">Lipid metabolism</keyword>
<keyword id="KW-0456">Lyase</keyword>
<keyword id="KW-0472">Membrane</keyword>
<keyword id="KW-0594">Phospholipid biosynthesis</keyword>
<keyword id="KW-1208">Phospholipid metabolism</keyword>
<keyword id="KW-0670">Pyruvate</keyword>
<keyword id="KW-1185">Reference proteome</keyword>
<keyword id="KW-0865">Zymogen</keyword>
<feature type="chain" id="PRO_0000029781" description="Phosphatidylserine decarboxylase beta chain" evidence="1">
    <location>
        <begin position="1"/>
        <end position="199"/>
    </location>
</feature>
<feature type="chain" id="PRO_0000029782" description="Phosphatidylserine decarboxylase alpha chain" evidence="1">
    <location>
        <begin position="200"/>
        <end position="231"/>
    </location>
</feature>
<feature type="active site" description="Schiff-base intermediate with substrate; via pyruvic acid" evidence="1">
    <location>
        <position position="200"/>
    </location>
</feature>
<feature type="site" description="Cleavage (non-hydrolytic); by autocatalysis" evidence="1">
    <location>
        <begin position="199"/>
        <end position="200"/>
    </location>
</feature>
<feature type="modified residue" description="Pyruvic acid (Ser); by autocatalysis" evidence="1">
    <location>
        <position position="200"/>
    </location>
</feature>